<accession>Q86A84</accession>
<accession>Q1ZXL4</accession>
<accession>Q3LG19</accession>
<name>MPPA1_DICDI</name>
<protein>
    <recommendedName>
        <fullName>Mitochondrial-processing peptidase subunit alpha-1</fullName>
    </recommendedName>
    <alternativeName>
        <fullName>Alpha-MPP</fullName>
        <shortName>Ddalpha-MPP</shortName>
    </alternativeName>
    <alternativeName>
        <fullName evidence="6">Inactive zinc metalloprotease alpha-1</fullName>
    </alternativeName>
</protein>
<dbReference type="EMBL" id="AB213513">
    <property type="protein sequence ID" value="BAE45920.1"/>
    <property type="molecule type" value="mRNA"/>
</dbReference>
<dbReference type="EMBL" id="AAFI02000012">
    <property type="protein sequence ID" value="EAS66919.1"/>
    <property type="molecule type" value="Genomic_DNA"/>
</dbReference>
<dbReference type="RefSeq" id="XP_001134603.1">
    <property type="nucleotide sequence ID" value="XM_001134603.1"/>
</dbReference>
<dbReference type="SMR" id="Q86A84"/>
<dbReference type="FunCoup" id="Q86A84">
    <property type="interactions" value="395"/>
</dbReference>
<dbReference type="STRING" id="44689.Q86A84"/>
<dbReference type="PaxDb" id="44689-DDB0232199"/>
<dbReference type="EnsemblProtists" id="EAS66919">
    <property type="protein sequence ID" value="EAS66919"/>
    <property type="gene ID" value="DDB_G0274809"/>
</dbReference>
<dbReference type="GeneID" id="8619373"/>
<dbReference type="KEGG" id="ddi:DDB_G0274809"/>
<dbReference type="dictyBase" id="DDB_G0274809">
    <property type="gene designation" value="mppA1"/>
</dbReference>
<dbReference type="VEuPathDB" id="AmoebaDB:DDB_G0274809"/>
<dbReference type="eggNOG" id="KOG2067">
    <property type="taxonomic scope" value="Eukaryota"/>
</dbReference>
<dbReference type="HOGENOM" id="CLU_419463_0_0_1"/>
<dbReference type="InParanoid" id="Q86A84"/>
<dbReference type="OMA" id="SEMTHVA"/>
<dbReference type="PhylomeDB" id="Q86A84"/>
<dbReference type="BRENDA" id="3.4.24.64">
    <property type="organism ID" value="1939"/>
</dbReference>
<dbReference type="Reactome" id="R-DDI-611105">
    <property type="pathway name" value="Respiratory electron transport"/>
</dbReference>
<dbReference type="Reactome" id="R-DDI-9837999">
    <property type="pathway name" value="Mitochondrial protein degradation"/>
</dbReference>
<dbReference type="PRO" id="PR:Q86A84"/>
<dbReference type="Proteomes" id="UP000002195">
    <property type="component" value="Chromosome 2"/>
</dbReference>
<dbReference type="GO" id="GO:0005759">
    <property type="term" value="C:mitochondrial matrix"/>
    <property type="evidence" value="ECO:0000314"/>
    <property type="project" value="dictyBase"/>
</dbReference>
<dbReference type="GO" id="GO:0017087">
    <property type="term" value="C:mitochondrial processing peptidase complex"/>
    <property type="evidence" value="ECO:0000250"/>
    <property type="project" value="dictyBase"/>
</dbReference>
<dbReference type="GO" id="GO:0005739">
    <property type="term" value="C:mitochondrion"/>
    <property type="evidence" value="ECO:0000314"/>
    <property type="project" value="dictyBase"/>
</dbReference>
<dbReference type="GO" id="GO:0004175">
    <property type="term" value="F:endopeptidase activity"/>
    <property type="evidence" value="ECO:0000314"/>
    <property type="project" value="dictyBase"/>
</dbReference>
<dbReference type="GO" id="GO:0046872">
    <property type="term" value="F:metal ion binding"/>
    <property type="evidence" value="ECO:0007669"/>
    <property type="project" value="InterPro"/>
</dbReference>
<dbReference type="GO" id="GO:0004222">
    <property type="term" value="F:metalloendopeptidase activity"/>
    <property type="evidence" value="ECO:0000250"/>
    <property type="project" value="dictyBase"/>
</dbReference>
<dbReference type="GO" id="GO:0006627">
    <property type="term" value="P:protein processing involved in protein targeting to mitochondrion"/>
    <property type="evidence" value="ECO:0000314"/>
    <property type="project" value="dictyBase"/>
</dbReference>
<dbReference type="FunFam" id="3.30.830.10:FF:000167">
    <property type="entry name" value="Mitochondrial-processing peptidase subunit alpha-1"/>
    <property type="match status" value="1"/>
</dbReference>
<dbReference type="FunFam" id="3.30.830.10:FF:000168">
    <property type="entry name" value="Mitochondrial-processing peptidase subunit alpha-1"/>
    <property type="match status" value="1"/>
</dbReference>
<dbReference type="Gene3D" id="3.30.830.10">
    <property type="entry name" value="Metalloenzyme, LuxS/M16 peptidase-like"/>
    <property type="match status" value="2"/>
</dbReference>
<dbReference type="InterPro" id="IPR011249">
    <property type="entry name" value="Metalloenz_LuxS/M16"/>
</dbReference>
<dbReference type="InterPro" id="IPR050361">
    <property type="entry name" value="MPP/UQCRC_Complex"/>
</dbReference>
<dbReference type="InterPro" id="IPR011765">
    <property type="entry name" value="Pept_M16_N"/>
</dbReference>
<dbReference type="InterPro" id="IPR007863">
    <property type="entry name" value="Peptidase_M16_C"/>
</dbReference>
<dbReference type="PANTHER" id="PTHR11851">
    <property type="entry name" value="METALLOPROTEASE"/>
    <property type="match status" value="1"/>
</dbReference>
<dbReference type="PANTHER" id="PTHR11851:SF222">
    <property type="entry name" value="MITOCHONDRIAL-PROCESSING PEPTIDASE SUBUNIT ALPHA-1"/>
    <property type="match status" value="1"/>
</dbReference>
<dbReference type="Pfam" id="PF00675">
    <property type="entry name" value="Peptidase_M16"/>
    <property type="match status" value="1"/>
</dbReference>
<dbReference type="Pfam" id="PF05193">
    <property type="entry name" value="Peptidase_M16_C"/>
    <property type="match status" value="1"/>
</dbReference>
<dbReference type="SUPFAM" id="SSF63411">
    <property type="entry name" value="LuxS/MPP-like metallohydrolase"/>
    <property type="match status" value="2"/>
</dbReference>
<gene>
    <name type="primary">mppA1</name>
    <name type="synonym">mppA</name>
    <name type="ORF">DDB_G0274809</name>
</gene>
<organism>
    <name type="scientific">Dictyostelium discoideum</name>
    <name type="common">Social amoeba</name>
    <dbReference type="NCBI Taxonomy" id="44689"/>
    <lineage>
        <taxon>Eukaryota</taxon>
        <taxon>Amoebozoa</taxon>
        <taxon>Evosea</taxon>
        <taxon>Eumycetozoa</taxon>
        <taxon>Dictyostelia</taxon>
        <taxon>Dictyosteliales</taxon>
        <taxon>Dictyosteliaceae</taxon>
        <taxon>Dictyostelium</taxon>
    </lineage>
</organism>
<proteinExistence type="evidence at transcript level"/>
<sequence>MNIIFLKVPSIFKKLNVGNIKILNVNQNSPSIIVNSNNTKSIKNHNYSSFTNNNNNNNKNQVNLVQNKSILSSSSSYKGNNNNNNKLSYTTSSNNNNNNKIEEIVKSTTVSPFTPLNILHPKLVGEKLYSNDNEANNNQKEFKAEISTLPNGIRVVSKQTHEGVCAIGLYINAGTKYESPQDRGVFNLLEKMTFKETKNNSTSEIIKELEEISMNAMASSSREMINVSLEVLRKDLEFVLSILSDQIKSPTYSEEELREQIEVCIRNYEMITNSSSDQLMTEILMGVAFGDAGLGNLVIATPEQYQNITREKLFDALRKYYVGKNIVISVTGAEHSQVIELVDKYFGDIPFTQKDTPSEDSIDSTITYKGGTDACVAGLIHKNHLKSQLQFLIEKQQKLKQQQQQQQPQPQNSNIDDNDNEEELLNLEIEQTKISIEQLELQQVKESSWIIAFPHSGLSTVAENKDIINGLVLQSLLGGGSSYSTGGPGKGMQSRLNLNVVYSSHRVKNCHAFLFVFNKVSLFGISLTTQSGFLQDGIELVLQELLMLRSSMTQQELERAKRSQKSQILQNLEMRSVQCDDMARHILSFGSYKSPEQICKLIDSVTLDDIKKLISKLAQSNPSVVSIVANENEPILTAEQYNQIVKQNSSTLFK</sequence>
<reference key="1">
    <citation type="journal article" date="2008" name="Biosci. Biotechnol. Biochem.">
        <title>Antisense RNA inhibition of the beta subunit of the Dictyostelium discoideum mitochondrial processing peptidase induces the expression of mitochondrial proteins.</title>
        <authorList>
            <person name="Nagayama K."/>
            <person name="Itono S."/>
            <person name="Yoshida T."/>
            <person name="Ishiguro S."/>
            <person name="Ochiai H."/>
            <person name="Ohmachi T."/>
        </authorList>
    </citation>
    <scope>NUCLEOTIDE SEQUENCE [MRNA]</scope>
    <scope>FUNCTION</scope>
    <scope>SUBCELLULAR LOCATION</scope>
</reference>
<reference key="2">
    <citation type="journal article" date="2002" name="Nature">
        <title>Sequence and analysis of chromosome 2 of Dictyostelium discoideum.</title>
        <authorList>
            <person name="Gloeckner G."/>
            <person name="Eichinger L."/>
            <person name="Szafranski K."/>
            <person name="Pachebat J.A."/>
            <person name="Bankier A.T."/>
            <person name="Dear P.H."/>
            <person name="Lehmann R."/>
            <person name="Baumgart C."/>
            <person name="Parra G."/>
            <person name="Abril J.F."/>
            <person name="Guigo R."/>
            <person name="Kumpf K."/>
            <person name="Tunggal B."/>
            <person name="Cox E.C."/>
            <person name="Quail M.A."/>
            <person name="Platzer M."/>
            <person name="Rosenthal A."/>
            <person name="Noegel A.A."/>
        </authorList>
    </citation>
    <scope>NUCLEOTIDE SEQUENCE [LARGE SCALE GENOMIC DNA]</scope>
    <source>
        <strain>AX4</strain>
    </source>
</reference>
<reference key="3">
    <citation type="journal article" date="2005" name="Nature">
        <title>The genome of the social amoeba Dictyostelium discoideum.</title>
        <authorList>
            <person name="Eichinger L."/>
            <person name="Pachebat J.A."/>
            <person name="Gloeckner G."/>
            <person name="Rajandream M.A."/>
            <person name="Sucgang R."/>
            <person name="Berriman M."/>
            <person name="Song J."/>
            <person name="Olsen R."/>
            <person name="Szafranski K."/>
            <person name="Xu Q."/>
            <person name="Tunggal B."/>
            <person name="Kummerfeld S."/>
            <person name="Madera M."/>
            <person name="Konfortov B.A."/>
            <person name="Rivero F."/>
            <person name="Bankier A.T."/>
            <person name="Lehmann R."/>
            <person name="Hamlin N."/>
            <person name="Davies R."/>
            <person name="Gaudet P."/>
            <person name="Fey P."/>
            <person name="Pilcher K."/>
            <person name="Chen G."/>
            <person name="Saunders D."/>
            <person name="Sodergren E.J."/>
            <person name="Davis P."/>
            <person name="Kerhornou A."/>
            <person name="Nie X."/>
            <person name="Hall N."/>
            <person name="Anjard C."/>
            <person name="Hemphill L."/>
            <person name="Bason N."/>
            <person name="Farbrother P."/>
            <person name="Desany B."/>
            <person name="Just E."/>
            <person name="Morio T."/>
            <person name="Rost R."/>
            <person name="Churcher C.M."/>
            <person name="Cooper J."/>
            <person name="Haydock S."/>
            <person name="van Driessche N."/>
            <person name="Cronin A."/>
            <person name="Goodhead I."/>
            <person name="Muzny D.M."/>
            <person name="Mourier T."/>
            <person name="Pain A."/>
            <person name="Lu M."/>
            <person name="Harper D."/>
            <person name="Lindsay R."/>
            <person name="Hauser H."/>
            <person name="James K.D."/>
            <person name="Quiles M."/>
            <person name="Madan Babu M."/>
            <person name="Saito T."/>
            <person name="Buchrieser C."/>
            <person name="Wardroper A."/>
            <person name="Felder M."/>
            <person name="Thangavelu M."/>
            <person name="Johnson D."/>
            <person name="Knights A."/>
            <person name="Loulseged H."/>
            <person name="Mungall K.L."/>
            <person name="Oliver K."/>
            <person name="Price C."/>
            <person name="Quail M.A."/>
            <person name="Urushihara H."/>
            <person name="Hernandez J."/>
            <person name="Rabbinowitsch E."/>
            <person name="Steffen D."/>
            <person name="Sanders M."/>
            <person name="Ma J."/>
            <person name="Kohara Y."/>
            <person name="Sharp S."/>
            <person name="Simmonds M.N."/>
            <person name="Spiegler S."/>
            <person name="Tivey A."/>
            <person name="Sugano S."/>
            <person name="White B."/>
            <person name="Walker D."/>
            <person name="Woodward J.R."/>
            <person name="Winckler T."/>
            <person name="Tanaka Y."/>
            <person name="Shaulsky G."/>
            <person name="Schleicher M."/>
            <person name="Weinstock G.M."/>
            <person name="Rosenthal A."/>
            <person name="Cox E.C."/>
            <person name="Chisholm R.L."/>
            <person name="Gibbs R.A."/>
            <person name="Loomis W.F."/>
            <person name="Platzer M."/>
            <person name="Kay R.R."/>
            <person name="Williams J.G."/>
            <person name="Dear P.H."/>
            <person name="Noegel A.A."/>
            <person name="Barrell B.G."/>
            <person name="Kuspa A."/>
        </authorList>
    </citation>
    <scope>NUCLEOTIDE SEQUENCE [LARGE SCALE GENOMIC DNA]</scope>
    <source>
        <strain>AX4</strain>
    </source>
</reference>
<evidence type="ECO:0000250" key="1"/>
<evidence type="ECO:0000250" key="2">
    <source>
        <dbReference type="UniProtKB" id="P10507"/>
    </source>
</evidence>
<evidence type="ECO:0000255" key="3"/>
<evidence type="ECO:0000256" key="4">
    <source>
        <dbReference type="SAM" id="MobiDB-lite"/>
    </source>
</evidence>
<evidence type="ECO:0000269" key="5">
    <source>
    </source>
</evidence>
<evidence type="ECO:0000305" key="6"/>
<comment type="function">
    <text evidence="5">Substrate recognition and binding subunit of the essential mitochondrial processing protease (MPP), which cleaves the mitochondrial sequence off newly imported precursors proteins.</text>
</comment>
<comment type="subunit">
    <text evidence="2">Heterodimer of alpha and beta subunits, forming the mitochondrial processing protease (MPP) in which subunit alpha is involved in substrate recognition and binding and subunit beta is the catalytic subunit.</text>
</comment>
<comment type="subcellular location">
    <subcellularLocation>
        <location evidence="5">Mitochondrion matrix</location>
    </subcellularLocation>
</comment>
<comment type="similarity">
    <text evidence="6">Belongs to the peptidase M16 family.</text>
</comment>
<feature type="transit peptide" description="Mitochondrion" evidence="1">
    <location>
        <begin position="1"/>
        <end status="unknown"/>
    </location>
</feature>
<feature type="chain" id="PRO_0000390659" description="Mitochondrial-processing peptidase subunit alpha-1">
    <location>
        <begin status="unknown"/>
        <end position="654"/>
    </location>
</feature>
<feature type="region of interest" description="Disordered" evidence="4">
    <location>
        <begin position="73"/>
        <end position="94"/>
    </location>
</feature>
<feature type="coiled-coil region" evidence="3">
    <location>
        <begin position="381"/>
        <end position="446"/>
    </location>
</feature>
<feature type="sequence conflict" description="In Ref. 1; BAE45920." evidence="6" ref="1">
    <original>IIF</original>
    <variation>NNI</variation>
    <location>
        <begin position="3"/>
        <end position="5"/>
    </location>
</feature>
<feature type="sequence conflict" description="In Ref. 1; BAE45920." evidence="6" ref="1">
    <original>P</original>
    <variation>H</variation>
    <location>
        <position position="9"/>
    </location>
</feature>
<keyword id="KW-0175">Coiled coil</keyword>
<keyword id="KW-0496">Mitochondrion</keyword>
<keyword id="KW-1185">Reference proteome</keyword>
<keyword id="KW-0809">Transit peptide</keyword>